<accession>A0PTH3</accession>
<gene>
    <name evidence="1" type="primary">glsA</name>
    <name type="ordered locus">MUL_3484</name>
</gene>
<sequence>MAPTSVSNARIEKAVLDAHEKQKNKHGGKNADYIPILAQVPSTLFGVSVATVDGQVFTAGDAGYEFALESISKIFTLALVIEQRGPRELRLKVGADPTGEAFNSVLALELHNDKPMSPLVNAGAISTTSLVDAVGPEDRWRQIVGAQSDFAGRQISISEEINASEQATNFHNRAIAWLLRGSGYIYCDPMEACDIYTRQCSTLVTTADLAVMGATLANGGTNPITGKRVIARKNVPHVLAEMTMEGVYTRSGDWAYTVGLPAKSGVGGGLVAVAPGQLAIAAFSPPLDKVGNSVRAQAAVAQIADTLQLGLFNVPGEEDE</sequence>
<proteinExistence type="inferred from homology"/>
<organism>
    <name type="scientific">Mycobacterium ulcerans (strain Agy99)</name>
    <dbReference type="NCBI Taxonomy" id="362242"/>
    <lineage>
        <taxon>Bacteria</taxon>
        <taxon>Bacillati</taxon>
        <taxon>Actinomycetota</taxon>
        <taxon>Actinomycetes</taxon>
        <taxon>Mycobacteriales</taxon>
        <taxon>Mycobacteriaceae</taxon>
        <taxon>Mycobacterium</taxon>
        <taxon>Mycobacterium ulcerans group</taxon>
    </lineage>
</organism>
<feature type="chain" id="PRO_0000336032" description="Glutaminase">
    <location>
        <begin position="1"/>
        <end position="320"/>
    </location>
</feature>
<feature type="binding site" evidence="1">
    <location>
        <position position="70"/>
    </location>
    <ligand>
        <name>substrate</name>
    </ligand>
</feature>
<feature type="binding site" evidence="1">
    <location>
        <position position="121"/>
    </location>
    <ligand>
        <name>substrate</name>
    </ligand>
</feature>
<feature type="binding site" evidence="1">
    <location>
        <position position="165"/>
    </location>
    <ligand>
        <name>substrate</name>
    </ligand>
</feature>
<feature type="binding site" evidence="1">
    <location>
        <position position="172"/>
    </location>
    <ligand>
        <name>substrate</name>
    </ligand>
</feature>
<feature type="binding site" evidence="1">
    <location>
        <position position="196"/>
    </location>
    <ligand>
        <name>substrate</name>
    </ligand>
</feature>
<feature type="binding site" evidence="1">
    <location>
        <position position="248"/>
    </location>
    <ligand>
        <name>substrate</name>
    </ligand>
</feature>
<feature type="binding site" evidence="1">
    <location>
        <position position="266"/>
    </location>
    <ligand>
        <name>substrate</name>
    </ligand>
</feature>
<reference key="1">
    <citation type="journal article" date="2007" name="Genome Res.">
        <title>Reductive evolution and niche adaptation inferred from the genome of Mycobacterium ulcerans, the causative agent of Buruli ulcer.</title>
        <authorList>
            <person name="Stinear T.P."/>
            <person name="Seemann T."/>
            <person name="Pidot S."/>
            <person name="Frigui W."/>
            <person name="Reysset G."/>
            <person name="Garnier T."/>
            <person name="Meurice G."/>
            <person name="Simon D."/>
            <person name="Bouchier C."/>
            <person name="Ma L."/>
            <person name="Tichit M."/>
            <person name="Porter J.L."/>
            <person name="Ryan J."/>
            <person name="Johnson P.D.R."/>
            <person name="Davies J.K."/>
            <person name="Jenkin G.A."/>
            <person name="Small P.L.C."/>
            <person name="Jones L.M."/>
            <person name="Tekaia F."/>
            <person name="Laval F."/>
            <person name="Daffe M."/>
            <person name="Parkhill J."/>
            <person name="Cole S.T."/>
        </authorList>
    </citation>
    <scope>NUCLEOTIDE SEQUENCE [LARGE SCALE GENOMIC DNA]</scope>
    <source>
        <strain>Agy99</strain>
    </source>
</reference>
<keyword id="KW-0378">Hydrolase</keyword>
<name>GLSA_MYCUA</name>
<dbReference type="EC" id="3.5.1.2" evidence="1"/>
<dbReference type="EMBL" id="CP000325">
    <property type="protein sequence ID" value="ABL05642.1"/>
    <property type="molecule type" value="Genomic_DNA"/>
</dbReference>
<dbReference type="RefSeq" id="WP_011741248.1">
    <property type="nucleotide sequence ID" value="NC_008611.1"/>
</dbReference>
<dbReference type="SMR" id="A0PTH3"/>
<dbReference type="GeneID" id="93436124"/>
<dbReference type="KEGG" id="mul:MUL_3484"/>
<dbReference type="eggNOG" id="COG2066">
    <property type="taxonomic scope" value="Bacteria"/>
</dbReference>
<dbReference type="HOGENOM" id="CLU_027932_1_0_11"/>
<dbReference type="Proteomes" id="UP000000765">
    <property type="component" value="Chromosome"/>
</dbReference>
<dbReference type="GO" id="GO:0004359">
    <property type="term" value="F:glutaminase activity"/>
    <property type="evidence" value="ECO:0007669"/>
    <property type="project" value="UniProtKB-UniRule"/>
</dbReference>
<dbReference type="GO" id="GO:0006537">
    <property type="term" value="P:glutamate biosynthetic process"/>
    <property type="evidence" value="ECO:0007669"/>
    <property type="project" value="TreeGrafter"/>
</dbReference>
<dbReference type="GO" id="GO:0006543">
    <property type="term" value="P:glutamine catabolic process"/>
    <property type="evidence" value="ECO:0007669"/>
    <property type="project" value="TreeGrafter"/>
</dbReference>
<dbReference type="Gene3D" id="3.40.710.10">
    <property type="entry name" value="DD-peptidase/beta-lactamase superfamily"/>
    <property type="match status" value="1"/>
</dbReference>
<dbReference type="HAMAP" id="MF_00313">
    <property type="entry name" value="Glutaminase"/>
    <property type="match status" value="1"/>
</dbReference>
<dbReference type="InterPro" id="IPR012338">
    <property type="entry name" value="Beta-lactam/transpept-like"/>
</dbReference>
<dbReference type="InterPro" id="IPR015868">
    <property type="entry name" value="Glutaminase"/>
</dbReference>
<dbReference type="NCBIfam" id="TIGR03814">
    <property type="entry name" value="Gln_ase"/>
    <property type="match status" value="1"/>
</dbReference>
<dbReference type="NCBIfam" id="NF009020">
    <property type="entry name" value="PRK12356.1"/>
    <property type="match status" value="1"/>
</dbReference>
<dbReference type="PANTHER" id="PTHR12544">
    <property type="entry name" value="GLUTAMINASE"/>
    <property type="match status" value="1"/>
</dbReference>
<dbReference type="PANTHER" id="PTHR12544:SF48">
    <property type="entry name" value="GLUTAMINASE 1"/>
    <property type="match status" value="1"/>
</dbReference>
<dbReference type="Pfam" id="PF04960">
    <property type="entry name" value="Glutaminase"/>
    <property type="match status" value="1"/>
</dbReference>
<dbReference type="SUPFAM" id="SSF56601">
    <property type="entry name" value="beta-lactamase/transpeptidase-like"/>
    <property type="match status" value="1"/>
</dbReference>
<evidence type="ECO:0000255" key="1">
    <source>
        <dbReference type="HAMAP-Rule" id="MF_00313"/>
    </source>
</evidence>
<protein>
    <recommendedName>
        <fullName evidence="1">Glutaminase</fullName>
        <ecNumber evidence="1">3.5.1.2</ecNumber>
    </recommendedName>
</protein>
<comment type="catalytic activity">
    <reaction evidence="1">
        <text>L-glutamine + H2O = L-glutamate + NH4(+)</text>
        <dbReference type="Rhea" id="RHEA:15889"/>
        <dbReference type="ChEBI" id="CHEBI:15377"/>
        <dbReference type="ChEBI" id="CHEBI:28938"/>
        <dbReference type="ChEBI" id="CHEBI:29985"/>
        <dbReference type="ChEBI" id="CHEBI:58359"/>
        <dbReference type="EC" id="3.5.1.2"/>
    </reaction>
</comment>
<comment type="subunit">
    <text evidence="1">Homotetramer.</text>
</comment>
<comment type="similarity">
    <text evidence="1">Belongs to the glutaminase family.</text>
</comment>